<name>EFTU_RUMCH</name>
<reference key="1">
    <citation type="submission" date="2009-01" db="EMBL/GenBank/DDBJ databases">
        <title>Complete sequence of Clostridium cellulolyticum H10.</title>
        <authorList>
            <consortium name="US DOE Joint Genome Institute"/>
            <person name="Lucas S."/>
            <person name="Copeland A."/>
            <person name="Lapidus A."/>
            <person name="Glavina del Rio T."/>
            <person name="Dalin E."/>
            <person name="Tice H."/>
            <person name="Bruce D."/>
            <person name="Goodwin L."/>
            <person name="Pitluck S."/>
            <person name="Chertkov O."/>
            <person name="Saunders E."/>
            <person name="Brettin T."/>
            <person name="Detter J.C."/>
            <person name="Han C."/>
            <person name="Larimer F."/>
            <person name="Land M."/>
            <person name="Hauser L."/>
            <person name="Kyrpides N."/>
            <person name="Ivanova N."/>
            <person name="Zhou J."/>
            <person name="Richardson P."/>
        </authorList>
    </citation>
    <scope>NUCLEOTIDE SEQUENCE [LARGE SCALE GENOMIC DNA]</scope>
    <source>
        <strain>ATCC 35319 / DSM 5812 / JCM 6584 / H10</strain>
    </source>
</reference>
<protein>
    <recommendedName>
        <fullName evidence="2">Elongation factor Tu</fullName>
        <shortName evidence="2">EF-Tu</shortName>
        <ecNumber evidence="2">3.6.5.3</ecNumber>
    </recommendedName>
</protein>
<feature type="chain" id="PRO_1000201396" description="Elongation factor Tu">
    <location>
        <begin position="1"/>
        <end position="400"/>
    </location>
</feature>
<feature type="domain" description="tr-type G">
    <location>
        <begin position="10"/>
        <end position="209"/>
    </location>
</feature>
<feature type="region of interest" description="G1" evidence="1">
    <location>
        <begin position="19"/>
        <end position="26"/>
    </location>
</feature>
<feature type="region of interest" description="G2" evidence="1">
    <location>
        <begin position="60"/>
        <end position="64"/>
    </location>
</feature>
<feature type="region of interest" description="G3" evidence="1">
    <location>
        <begin position="81"/>
        <end position="84"/>
    </location>
</feature>
<feature type="region of interest" description="G4" evidence="1">
    <location>
        <begin position="136"/>
        <end position="139"/>
    </location>
</feature>
<feature type="region of interest" description="G5" evidence="1">
    <location>
        <begin position="174"/>
        <end position="176"/>
    </location>
</feature>
<feature type="binding site" evidence="2">
    <location>
        <begin position="19"/>
        <end position="26"/>
    </location>
    <ligand>
        <name>GTP</name>
        <dbReference type="ChEBI" id="CHEBI:37565"/>
    </ligand>
</feature>
<feature type="binding site" evidence="2">
    <location>
        <position position="26"/>
    </location>
    <ligand>
        <name>Mg(2+)</name>
        <dbReference type="ChEBI" id="CHEBI:18420"/>
    </ligand>
</feature>
<feature type="binding site" evidence="2">
    <location>
        <begin position="81"/>
        <end position="85"/>
    </location>
    <ligand>
        <name>GTP</name>
        <dbReference type="ChEBI" id="CHEBI:37565"/>
    </ligand>
</feature>
<feature type="binding site" evidence="2">
    <location>
        <begin position="136"/>
        <end position="139"/>
    </location>
    <ligand>
        <name>GTP</name>
        <dbReference type="ChEBI" id="CHEBI:37565"/>
    </ligand>
</feature>
<organism>
    <name type="scientific">Ruminiclostridium cellulolyticum (strain ATCC 35319 / DSM 5812 / JCM 6584 / H10)</name>
    <name type="common">Clostridium cellulolyticum</name>
    <dbReference type="NCBI Taxonomy" id="394503"/>
    <lineage>
        <taxon>Bacteria</taxon>
        <taxon>Bacillati</taxon>
        <taxon>Bacillota</taxon>
        <taxon>Clostridia</taxon>
        <taxon>Eubacteriales</taxon>
        <taxon>Oscillospiraceae</taxon>
        <taxon>Ruminiclostridium</taxon>
    </lineage>
</organism>
<sequence length="400" mass="43815">MAKAKFERNKPHVNIGTIGHVDHGKTSLTAAITKVLGFLGSAEYKAYDQIDAAPEERERGITINTSHVEYQTETRHYAHVDCPGHADYVKNMITGAAQMDGAILVVSAADGPMPQTREHILLSHQVGVPYIIVFLNKCDMVDDDELIELVEMEVRELLSSYEFPGDDTPIIRGSALVALESTSTDINSPEYAPIVALMKEVDNYIPTPERATDKAFIMPVEDVFSITGRGTVATGRVEKGIVKVGDEVEIVGLMEAPKKTVVTGVEMFRKLLDQAEAGDNIGALLRGVQRTDIERGQVLAKPGSIKPHTYFEGQVYVLTSAEGGRHKPFFNGYRPQFYFRTTDVTGVIEIPEGTEMVMPGDHITMKIKLITPIAMEEGLKFAIREGGRTVGAGNVSKIIE</sequence>
<keyword id="KW-0963">Cytoplasm</keyword>
<keyword id="KW-0251">Elongation factor</keyword>
<keyword id="KW-0342">GTP-binding</keyword>
<keyword id="KW-0378">Hydrolase</keyword>
<keyword id="KW-0460">Magnesium</keyword>
<keyword id="KW-0479">Metal-binding</keyword>
<keyword id="KW-0547">Nucleotide-binding</keyword>
<keyword id="KW-0648">Protein biosynthesis</keyword>
<keyword id="KW-1185">Reference proteome</keyword>
<proteinExistence type="inferred from homology"/>
<accession>B8I5N8</accession>
<comment type="function">
    <text evidence="2">GTP hydrolase that promotes the GTP-dependent binding of aminoacyl-tRNA to the A-site of ribosomes during protein biosynthesis.</text>
</comment>
<comment type="catalytic activity">
    <reaction evidence="2">
        <text>GTP + H2O = GDP + phosphate + H(+)</text>
        <dbReference type="Rhea" id="RHEA:19669"/>
        <dbReference type="ChEBI" id="CHEBI:15377"/>
        <dbReference type="ChEBI" id="CHEBI:15378"/>
        <dbReference type="ChEBI" id="CHEBI:37565"/>
        <dbReference type="ChEBI" id="CHEBI:43474"/>
        <dbReference type="ChEBI" id="CHEBI:58189"/>
        <dbReference type="EC" id="3.6.5.3"/>
    </reaction>
    <physiologicalReaction direction="left-to-right" evidence="2">
        <dbReference type="Rhea" id="RHEA:19670"/>
    </physiologicalReaction>
</comment>
<comment type="subunit">
    <text evidence="2">Monomer.</text>
</comment>
<comment type="subcellular location">
    <subcellularLocation>
        <location evidence="2">Cytoplasm</location>
    </subcellularLocation>
</comment>
<comment type="similarity">
    <text evidence="2">Belongs to the TRAFAC class translation factor GTPase superfamily. Classic translation factor GTPase family. EF-Tu/EF-1A subfamily.</text>
</comment>
<dbReference type="EC" id="3.6.5.3" evidence="2"/>
<dbReference type="EMBL" id="CP001348">
    <property type="protein sequence ID" value="ACL74705.1"/>
    <property type="molecule type" value="Genomic_DNA"/>
</dbReference>
<dbReference type="RefSeq" id="WP_012634770.1">
    <property type="nucleotide sequence ID" value="NC_011898.1"/>
</dbReference>
<dbReference type="SMR" id="B8I5N8"/>
<dbReference type="STRING" id="394503.Ccel_0318"/>
<dbReference type="KEGG" id="cce:Ccel_0318"/>
<dbReference type="eggNOG" id="COG0050">
    <property type="taxonomic scope" value="Bacteria"/>
</dbReference>
<dbReference type="HOGENOM" id="CLU_007265_0_1_9"/>
<dbReference type="OrthoDB" id="9804504at2"/>
<dbReference type="Proteomes" id="UP000001349">
    <property type="component" value="Chromosome"/>
</dbReference>
<dbReference type="GO" id="GO:0005829">
    <property type="term" value="C:cytosol"/>
    <property type="evidence" value="ECO:0007669"/>
    <property type="project" value="TreeGrafter"/>
</dbReference>
<dbReference type="GO" id="GO:0005525">
    <property type="term" value="F:GTP binding"/>
    <property type="evidence" value="ECO:0007669"/>
    <property type="project" value="UniProtKB-UniRule"/>
</dbReference>
<dbReference type="GO" id="GO:0003924">
    <property type="term" value="F:GTPase activity"/>
    <property type="evidence" value="ECO:0007669"/>
    <property type="project" value="InterPro"/>
</dbReference>
<dbReference type="GO" id="GO:0003746">
    <property type="term" value="F:translation elongation factor activity"/>
    <property type="evidence" value="ECO:0007669"/>
    <property type="project" value="UniProtKB-UniRule"/>
</dbReference>
<dbReference type="CDD" id="cd01884">
    <property type="entry name" value="EF_Tu"/>
    <property type="match status" value="1"/>
</dbReference>
<dbReference type="CDD" id="cd03697">
    <property type="entry name" value="EFTU_II"/>
    <property type="match status" value="1"/>
</dbReference>
<dbReference type="CDD" id="cd03707">
    <property type="entry name" value="EFTU_III"/>
    <property type="match status" value="1"/>
</dbReference>
<dbReference type="FunFam" id="2.40.30.10:FF:000001">
    <property type="entry name" value="Elongation factor Tu"/>
    <property type="match status" value="1"/>
</dbReference>
<dbReference type="FunFam" id="3.40.50.300:FF:000003">
    <property type="entry name" value="Elongation factor Tu"/>
    <property type="match status" value="1"/>
</dbReference>
<dbReference type="Gene3D" id="3.40.50.300">
    <property type="entry name" value="P-loop containing nucleotide triphosphate hydrolases"/>
    <property type="match status" value="1"/>
</dbReference>
<dbReference type="Gene3D" id="2.40.30.10">
    <property type="entry name" value="Translation factors"/>
    <property type="match status" value="2"/>
</dbReference>
<dbReference type="HAMAP" id="MF_00118_B">
    <property type="entry name" value="EF_Tu_B"/>
    <property type="match status" value="1"/>
</dbReference>
<dbReference type="InterPro" id="IPR041709">
    <property type="entry name" value="EF-Tu_GTP-bd"/>
</dbReference>
<dbReference type="InterPro" id="IPR050055">
    <property type="entry name" value="EF-Tu_GTPase"/>
</dbReference>
<dbReference type="InterPro" id="IPR004161">
    <property type="entry name" value="EFTu-like_2"/>
</dbReference>
<dbReference type="InterPro" id="IPR033720">
    <property type="entry name" value="EFTU_2"/>
</dbReference>
<dbReference type="InterPro" id="IPR031157">
    <property type="entry name" value="G_TR_CS"/>
</dbReference>
<dbReference type="InterPro" id="IPR027417">
    <property type="entry name" value="P-loop_NTPase"/>
</dbReference>
<dbReference type="InterPro" id="IPR005225">
    <property type="entry name" value="Small_GTP-bd"/>
</dbReference>
<dbReference type="InterPro" id="IPR000795">
    <property type="entry name" value="T_Tr_GTP-bd_dom"/>
</dbReference>
<dbReference type="InterPro" id="IPR009000">
    <property type="entry name" value="Transl_B-barrel_sf"/>
</dbReference>
<dbReference type="InterPro" id="IPR009001">
    <property type="entry name" value="Transl_elong_EF1A/Init_IF2_C"/>
</dbReference>
<dbReference type="InterPro" id="IPR004541">
    <property type="entry name" value="Transl_elong_EFTu/EF1A_bac/org"/>
</dbReference>
<dbReference type="InterPro" id="IPR004160">
    <property type="entry name" value="Transl_elong_EFTu/EF1A_C"/>
</dbReference>
<dbReference type="NCBIfam" id="TIGR00485">
    <property type="entry name" value="EF-Tu"/>
    <property type="match status" value="1"/>
</dbReference>
<dbReference type="NCBIfam" id="NF000766">
    <property type="entry name" value="PRK00049.1"/>
    <property type="match status" value="1"/>
</dbReference>
<dbReference type="NCBIfam" id="NF009372">
    <property type="entry name" value="PRK12735.1"/>
    <property type="match status" value="1"/>
</dbReference>
<dbReference type="NCBIfam" id="NF009373">
    <property type="entry name" value="PRK12736.1"/>
    <property type="match status" value="1"/>
</dbReference>
<dbReference type="NCBIfam" id="TIGR00231">
    <property type="entry name" value="small_GTP"/>
    <property type="match status" value="1"/>
</dbReference>
<dbReference type="PANTHER" id="PTHR43721:SF22">
    <property type="entry name" value="ELONGATION FACTOR TU, MITOCHONDRIAL"/>
    <property type="match status" value="1"/>
</dbReference>
<dbReference type="PANTHER" id="PTHR43721">
    <property type="entry name" value="ELONGATION FACTOR TU-RELATED"/>
    <property type="match status" value="1"/>
</dbReference>
<dbReference type="Pfam" id="PF00009">
    <property type="entry name" value="GTP_EFTU"/>
    <property type="match status" value="1"/>
</dbReference>
<dbReference type="Pfam" id="PF03144">
    <property type="entry name" value="GTP_EFTU_D2"/>
    <property type="match status" value="1"/>
</dbReference>
<dbReference type="Pfam" id="PF03143">
    <property type="entry name" value="GTP_EFTU_D3"/>
    <property type="match status" value="1"/>
</dbReference>
<dbReference type="PRINTS" id="PR00315">
    <property type="entry name" value="ELONGATNFCT"/>
</dbReference>
<dbReference type="SUPFAM" id="SSF50465">
    <property type="entry name" value="EF-Tu/eEF-1alpha/eIF2-gamma C-terminal domain"/>
    <property type="match status" value="1"/>
</dbReference>
<dbReference type="SUPFAM" id="SSF52540">
    <property type="entry name" value="P-loop containing nucleoside triphosphate hydrolases"/>
    <property type="match status" value="1"/>
</dbReference>
<dbReference type="SUPFAM" id="SSF50447">
    <property type="entry name" value="Translation proteins"/>
    <property type="match status" value="1"/>
</dbReference>
<dbReference type="PROSITE" id="PS00301">
    <property type="entry name" value="G_TR_1"/>
    <property type="match status" value="1"/>
</dbReference>
<dbReference type="PROSITE" id="PS51722">
    <property type="entry name" value="G_TR_2"/>
    <property type="match status" value="1"/>
</dbReference>
<gene>
    <name evidence="2" type="primary">tuf</name>
    <name type="ordered locus">Ccel_0318</name>
</gene>
<evidence type="ECO:0000250" key="1"/>
<evidence type="ECO:0000255" key="2">
    <source>
        <dbReference type="HAMAP-Rule" id="MF_00118"/>
    </source>
</evidence>